<accession>Q9LRZ4</accession>
<accession>Q8LPG8</accession>
<keyword id="KW-0025">Alternative splicing</keyword>
<keyword id="KW-0378">Hydrolase</keyword>
<keyword id="KW-0460">Magnesium</keyword>
<keyword id="KW-0464">Manganese</keyword>
<keyword id="KW-0479">Metal-binding</keyword>
<keyword id="KW-0904">Protein phosphatase</keyword>
<keyword id="KW-1185">Reference proteome</keyword>
<comment type="catalytic activity">
    <reaction>
        <text>O-phospho-L-seryl-[protein] + H2O = L-seryl-[protein] + phosphate</text>
        <dbReference type="Rhea" id="RHEA:20629"/>
        <dbReference type="Rhea" id="RHEA-COMP:9863"/>
        <dbReference type="Rhea" id="RHEA-COMP:11604"/>
        <dbReference type="ChEBI" id="CHEBI:15377"/>
        <dbReference type="ChEBI" id="CHEBI:29999"/>
        <dbReference type="ChEBI" id="CHEBI:43474"/>
        <dbReference type="ChEBI" id="CHEBI:83421"/>
        <dbReference type="EC" id="3.1.3.16"/>
    </reaction>
</comment>
<comment type="catalytic activity">
    <reaction>
        <text>O-phospho-L-threonyl-[protein] + H2O = L-threonyl-[protein] + phosphate</text>
        <dbReference type="Rhea" id="RHEA:47004"/>
        <dbReference type="Rhea" id="RHEA-COMP:11060"/>
        <dbReference type="Rhea" id="RHEA-COMP:11605"/>
        <dbReference type="ChEBI" id="CHEBI:15377"/>
        <dbReference type="ChEBI" id="CHEBI:30013"/>
        <dbReference type="ChEBI" id="CHEBI:43474"/>
        <dbReference type="ChEBI" id="CHEBI:61977"/>
        <dbReference type="EC" id="3.1.3.16"/>
    </reaction>
</comment>
<comment type="cofactor">
    <cofactor evidence="1">
        <name>Mg(2+)</name>
        <dbReference type="ChEBI" id="CHEBI:18420"/>
    </cofactor>
    <cofactor evidence="1">
        <name>Mn(2+)</name>
        <dbReference type="ChEBI" id="CHEBI:29035"/>
    </cofactor>
    <text evidence="1">Binds 2 magnesium or manganese ions per subunit.</text>
</comment>
<comment type="alternative products">
    <event type="alternative splicing"/>
    <isoform>
        <id>Q9LRZ4-1</id>
        <name>1</name>
        <sequence type="displayed"/>
    </isoform>
    <isoform>
        <id>Q9LRZ4-2</id>
        <name>2</name>
        <sequence type="described" ref="VSP_036767 VSP_036768 VSP_036769"/>
    </isoform>
</comment>
<comment type="miscellaneous">
    <molecule>Isoform 2</molecule>
    <text evidence="4">May be due to intron retention.</text>
</comment>
<comment type="similarity">
    <text evidence="4">Belongs to the PP2C family.</text>
</comment>
<reference key="1">
    <citation type="journal article" date="2000" name="DNA Res.">
        <title>Structural analysis of Arabidopsis thaliana chromosome 3. I. Sequence features of the regions of 4,504,864 bp covered by sixty P1 and TAC clones.</title>
        <authorList>
            <person name="Sato S."/>
            <person name="Nakamura Y."/>
            <person name="Kaneko T."/>
            <person name="Katoh T."/>
            <person name="Asamizu E."/>
            <person name="Tabata S."/>
        </authorList>
    </citation>
    <scope>NUCLEOTIDE SEQUENCE [LARGE SCALE GENOMIC DNA]</scope>
    <source>
        <strain>cv. Columbia</strain>
    </source>
</reference>
<reference key="2">
    <citation type="journal article" date="2017" name="Plant J.">
        <title>Araport11: a complete reannotation of the Arabidopsis thaliana reference genome.</title>
        <authorList>
            <person name="Cheng C.Y."/>
            <person name="Krishnakumar V."/>
            <person name="Chan A.P."/>
            <person name="Thibaud-Nissen F."/>
            <person name="Schobel S."/>
            <person name="Town C.D."/>
        </authorList>
    </citation>
    <scope>GENOME REANNOTATION</scope>
    <source>
        <strain>cv. Columbia</strain>
    </source>
</reference>
<reference key="3">
    <citation type="journal article" date="2003" name="Science">
        <title>Empirical analysis of transcriptional activity in the Arabidopsis genome.</title>
        <authorList>
            <person name="Yamada K."/>
            <person name="Lim J."/>
            <person name="Dale J.M."/>
            <person name="Chen H."/>
            <person name="Shinn P."/>
            <person name="Palm C.J."/>
            <person name="Southwick A.M."/>
            <person name="Wu H.C."/>
            <person name="Kim C.J."/>
            <person name="Nguyen M."/>
            <person name="Pham P.K."/>
            <person name="Cheuk R.F."/>
            <person name="Karlin-Newmann G."/>
            <person name="Liu S.X."/>
            <person name="Lam B."/>
            <person name="Sakano H."/>
            <person name="Wu T."/>
            <person name="Yu G."/>
            <person name="Miranda M."/>
            <person name="Quach H.L."/>
            <person name="Tripp M."/>
            <person name="Chang C.H."/>
            <person name="Lee J.M."/>
            <person name="Toriumi M.J."/>
            <person name="Chan M.M."/>
            <person name="Tang C.C."/>
            <person name="Onodera C.S."/>
            <person name="Deng J.M."/>
            <person name="Akiyama K."/>
            <person name="Ansari Y."/>
            <person name="Arakawa T."/>
            <person name="Banh J."/>
            <person name="Banno F."/>
            <person name="Bowser L."/>
            <person name="Brooks S.Y."/>
            <person name="Carninci P."/>
            <person name="Chao Q."/>
            <person name="Choy N."/>
            <person name="Enju A."/>
            <person name="Goldsmith A.D."/>
            <person name="Gurjal M."/>
            <person name="Hansen N.F."/>
            <person name="Hayashizaki Y."/>
            <person name="Johnson-Hopson C."/>
            <person name="Hsuan V.W."/>
            <person name="Iida K."/>
            <person name="Karnes M."/>
            <person name="Khan S."/>
            <person name="Koesema E."/>
            <person name="Ishida J."/>
            <person name="Jiang P.X."/>
            <person name="Jones T."/>
            <person name="Kawai J."/>
            <person name="Kamiya A."/>
            <person name="Meyers C."/>
            <person name="Nakajima M."/>
            <person name="Narusaka M."/>
            <person name="Seki M."/>
            <person name="Sakurai T."/>
            <person name="Satou M."/>
            <person name="Tamse R."/>
            <person name="Vaysberg M."/>
            <person name="Wallender E.K."/>
            <person name="Wong C."/>
            <person name="Yamamura Y."/>
            <person name="Yuan S."/>
            <person name="Shinozaki K."/>
            <person name="Davis R.W."/>
            <person name="Theologis A."/>
            <person name="Ecker J.R."/>
        </authorList>
    </citation>
    <scope>NUCLEOTIDE SEQUENCE [LARGE SCALE MRNA] (ISOFORM 2)</scope>
    <source>
        <strain>cv. Columbia</strain>
    </source>
</reference>
<reference key="4">
    <citation type="journal article" date="2009" name="DNA Res.">
        <title>Analysis of multiple occurrences of alternative splicing events in Arabidopsis thaliana using novel sequenced full-length cDNAs.</title>
        <authorList>
            <person name="Iida K."/>
            <person name="Fukami-Kobayashi K."/>
            <person name="Toyoda A."/>
            <person name="Sakaki Y."/>
            <person name="Kobayashi M."/>
            <person name="Seki M."/>
            <person name="Shinozaki K."/>
        </authorList>
    </citation>
    <scope>NUCLEOTIDE SEQUENCE [LARGE SCALE MRNA] (ISOFORM 1)</scope>
    <source>
        <strain>cv. Columbia</strain>
    </source>
</reference>
<reference key="5">
    <citation type="submission" date="2002-03" db="EMBL/GenBank/DDBJ databases">
        <title>Full-length cDNA from Arabidopsis thaliana.</title>
        <authorList>
            <person name="Brover V.V."/>
            <person name="Troukhan M.E."/>
            <person name="Alexandrov N.A."/>
            <person name="Lu Y.-P."/>
            <person name="Flavell R.B."/>
            <person name="Feldmann K.A."/>
        </authorList>
    </citation>
    <scope>NUCLEOTIDE SEQUENCE [LARGE SCALE MRNA] (ISOFORM 1)</scope>
</reference>
<reference key="6">
    <citation type="journal article" date="2008" name="BMC Genomics">
        <title>Genome-wide and expression analysis of protein phosphatase 2C in rice and Arabidopsis.</title>
        <authorList>
            <person name="Xue T."/>
            <person name="Wang D."/>
            <person name="Zhang S."/>
            <person name="Ehlting J."/>
            <person name="Ni F."/>
            <person name="Jacab S."/>
            <person name="Zheng C."/>
            <person name="Zhong Y."/>
        </authorList>
    </citation>
    <scope>GENE FAMILY</scope>
    <scope>NOMENCLATURE</scope>
</reference>
<organism>
    <name type="scientific">Arabidopsis thaliana</name>
    <name type="common">Mouse-ear cress</name>
    <dbReference type="NCBI Taxonomy" id="3702"/>
    <lineage>
        <taxon>Eukaryota</taxon>
        <taxon>Viridiplantae</taxon>
        <taxon>Streptophyta</taxon>
        <taxon>Embryophyta</taxon>
        <taxon>Tracheophyta</taxon>
        <taxon>Spermatophyta</taxon>
        <taxon>Magnoliopsida</taxon>
        <taxon>eudicotyledons</taxon>
        <taxon>Gunneridae</taxon>
        <taxon>Pentapetalae</taxon>
        <taxon>rosids</taxon>
        <taxon>malvids</taxon>
        <taxon>Brassicales</taxon>
        <taxon>Brassicaceae</taxon>
        <taxon>Camelineae</taxon>
        <taxon>Arabidopsis</taxon>
    </lineage>
</organism>
<sequence length="351" mass="38601">MVLLPAFLDGLARTVSTKKGKKLSEDEDGGREIAKSMIKDSKKNSTLLGTSGFVSSESSKRFTSICSNRGEKGINQDRAIVWEGFGCQEDITFCGMFDGHGPWGHVIAKRVKKSFPSSLLCQWQQTLASLSSSPECSSPFDLWKQACLKTFSIIDLDLKISPSIDSYCSGCTALTAVLQGDHLVIANAGDSRAVIATTSDDGNGLVPVQLSVDFKPNIPEEAERIKQSDGRLFCLDDEPGVYRVGMPNGGSLGLAVSRAFGDYCLKDFGLVSEPEVTYRKITDKDQFLILATDGMWDVMTNNEAVEIVRGVKERRKSAKRLVERAVTLWRRKRRSIAMDDISVLCLFFRPS</sequence>
<proteinExistence type="evidence at transcript level"/>
<evidence type="ECO:0000250" key="1"/>
<evidence type="ECO:0000255" key="2">
    <source>
        <dbReference type="PROSITE-ProRule" id="PRU01082"/>
    </source>
</evidence>
<evidence type="ECO:0000303" key="3">
    <source>
    </source>
</evidence>
<evidence type="ECO:0000305" key="4"/>
<name>P2C41_ARATH</name>
<feature type="chain" id="PRO_0000367965" description="Probable protein phosphatase 2C 41">
    <location>
        <begin position="1"/>
        <end position="351"/>
    </location>
</feature>
<feature type="domain" description="PPM-type phosphatase" evidence="2">
    <location>
        <begin position="62"/>
        <end position="348"/>
    </location>
</feature>
<feature type="binding site" evidence="1">
    <location>
        <position position="98"/>
    </location>
    <ligand>
        <name>Mn(2+)</name>
        <dbReference type="ChEBI" id="CHEBI:29035"/>
        <label>1</label>
    </ligand>
</feature>
<feature type="binding site" evidence="1">
    <location>
        <position position="98"/>
    </location>
    <ligand>
        <name>Mn(2+)</name>
        <dbReference type="ChEBI" id="CHEBI:29035"/>
        <label>2</label>
    </ligand>
</feature>
<feature type="binding site" evidence="1">
    <location>
        <position position="99"/>
    </location>
    <ligand>
        <name>Mn(2+)</name>
        <dbReference type="ChEBI" id="CHEBI:29035"/>
        <label>1</label>
    </ligand>
</feature>
<feature type="binding site" evidence="1">
    <location>
        <position position="293"/>
    </location>
    <ligand>
        <name>Mn(2+)</name>
        <dbReference type="ChEBI" id="CHEBI:29035"/>
        <label>2</label>
    </ligand>
</feature>
<feature type="binding site" evidence="1">
    <location>
        <position position="339"/>
    </location>
    <ligand>
        <name>Mn(2+)</name>
        <dbReference type="ChEBI" id="CHEBI:29035"/>
        <label>2</label>
    </ligand>
</feature>
<feature type="splice variant" id="VSP_036767" description="In isoform 2." evidence="3">
    <location>
        <begin position="1"/>
        <end position="95"/>
    </location>
</feature>
<feature type="splice variant" id="VSP_036768" description="In isoform 2." evidence="3">
    <original>MWDVMTNNEAVEIVRGVKERR</original>
    <variation>VIYQTYSAFKSKSRLINHIIV</variation>
    <location>
        <begin position="295"/>
        <end position="315"/>
    </location>
</feature>
<feature type="splice variant" id="VSP_036769" description="In isoform 2." evidence="3">
    <location>
        <begin position="316"/>
        <end position="351"/>
    </location>
</feature>
<protein>
    <recommendedName>
        <fullName>Probable protein phosphatase 2C 41</fullName>
        <shortName>AtPP2C41</shortName>
        <ecNumber>3.1.3.16</ecNumber>
    </recommendedName>
</protein>
<gene>
    <name type="ordered locus">At3g16800</name>
    <name type="ORF">K20I9.2</name>
</gene>
<dbReference type="EC" id="3.1.3.16"/>
<dbReference type="EMBL" id="AB028608">
    <property type="protein sequence ID" value="BAA95773.1"/>
    <property type="molecule type" value="Genomic_DNA"/>
</dbReference>
<dbReference type="EMBL" id="CP002686">
    <property type="protein sequence ID" value="AEE75866.1"/>
    <property type="molecule type" value="Genomic_DNA"/>
</dbReference>
<dbReference type="EMBL" id="CP002686">
    <property type="protein sequence ID" value="AEE75867.1"/>
    <property type="molecule type" value="Genomic_DNA"/>
</dbReference>
<dbReference type="EMBL" id="CP002686">
    <property type="protein sequence ID" value="AEE75868.2"/>
    <property type="molecule type" value="Genomic_DNA"/>
</dbReference>
<dbReference type="EMBL" id="AY099831">
    <property type="protein sequence ID" value="AAM20682.1"/>
    <property type="molecule type" value="mRNA"/>
</dbReference>
<dbReference type="EMBL" id="BT000321">
    <property type="protein sequence ID" value="AAN15640.1"/>
    <property type="molecule type" value="mRNA"/>
</dbReference>
<dbReference type="EMBL" id="AK317121">
    <property type="protein sequence ID" value="BAH19809.1"/>
    <property type="molecule type" value="mRNA"/>
</dbReference>
<dbReference type="EMBL" id="AY088376">
    <property type="protein sequence ID" value="AAM65915.1"/>
    <property type="molecule type" value="mRNA"/>
</dbReference>
<dbReference type="RefSeq" id="NP_001319572.1">
    <molecule id="Q9LRZ4-1"/>
    <property type="nucleotide sequence ID" value="NM_001338260.1"/>
</dbReference>
<dbReference type="RefSeq" id="NP_188303.1">
    <molecule id="Q9LRZ4-1"/>
    <property type="nucleotide sequence ID" value="NM_112554.3"/>
</dbReference>
<dbReference type="RefSeq" id="NP_850599.2">
    <molecule id="Q9LRZ4-1"/>
    <property type="nucleotide sequence ID" value="NM_180268.4"/>
</dbReference>
<dbReference type="SMR" id="Q9LRZ4"/>
<dbReference type="BioGRID" id="6267">
    <property type="interactions" value="1"/>
</dbReference>
<dbReference type="FunCoup" id="Q9LRZ4">
    <property type="interactions" value="279"/>
</dbReference>
<dbReference type="IntAct" id="Q9LRZ4">
    <property type="interactions" value="1"/>
</dbReference>
<dbReference type="STRING" id="3702.Q9LRZ4"/>
<dbReference type="PaxDb" id="3702-AT3G16800.2"/>
<dbReference type="ProteomicsDB" id="248711">
    <molecule id="Q9LRZ4-1"/>
</dbReference>
<dbReference type="EnsemblPlants" id="AT3G16800.1">
    <molecule id="Q9LRZ4-1"/>
    <property type="protein sequence ID" value="AT3G16800.1"/>
    <property type="gene ID" value="AT3G16800"/>
</dbReference>
<dbReference type="EnsemblPlants" id="AT3G16800.2">
    <molecule id="Q9LRZ4-1"/>
    <property type="protein sequence ID" value="AT3G16800.2"/>
    <property type="gene ID" value="AT3G16800"/>
</dbReference>
<dbReference type="EnsemblPlants" id="AT3G16800.3">
    <molecule id="Q9LRZ4-1"/>
    <property type="protein sequence ID" value="AT3G16800.3"/>
    <property type="gene ID" value="AT3G16800"/>
</dbReference>
<dbReference type="GeneID" id="820933"/>
<dbReference type="Gramene" id="AT3G16800.1">
    <molecule id="Q9LRZ4-1"/>
    <property type="protein sequence ID" value="AT3G16800.1"/>
    <property type="gene ID" value="AT3G16800"/>
</dbReference>
<dbReference type="Gramene" id="AT3G16800.2">
    <molecule id="Q9LRZ4-1"/>
    <property type="protein sequence ID" value="AT3G16800.2"/>
    <property type="gene ID" value="AT3G16800"/>
</dbReference>
<dbReference type="Gramene" id="AT3G16800.3">
    <molecule id="Q9LRZ4-1"/>
    <property type="protein sequence ID" value="AT3G16800.3"/>
    <property type="gene ID" value="AT3G16800"/>
</dbReference>
<dbReference type="KEGG" id="ath:AT3G16800"/>
<dbReference type="Araport" id="AT3G16800"/>
<dbReference type="TAIR" id="AT3G16800">
    <property type="gene designation" value="EGR3"/>
</dbReference>
<dbReference type="eggNOG" id="KOG0698">
    <property type="taxonomic scope" value="Eukaryota"/>
</dbReference>
<dbReference type="HOGENOM" id="CLU_013173_6_0_1"/>
<dbReference type="InParanoid" id="Q9LRZ4"/>
<dbReference type="OMA" id="CAIREWK"/>
<dbReference type="OrthoDB" id="10264738at2759"/>
<dbReference type="PhylomeDB" id="Q9LRZ4"/>
<dbReference type="PRO" id="PR:Q9LRZ4"/>
<dbReference type="Proteomes" id="UP000006548">
    <property type="component" value="Chromosome 3"/>
</dbReference>
<dbReference type="ExpressionAtlas" id="Q9LRZ4">
    <property type="expression patterns" value="baseline and differential"/>
</dbReference>
<dbReference type="GO" id="GO:0005737">
    <property type="term" value="C:cytoplasm"/>
    <property type="evidence" value="ECO:0007005"/>
    <property type="project" value="TAIR"/>
</dbReference>
<dbReference type="GO" id="GO:0005634">
    <property type="term" value="C:nucleus"/>
    <property type="evidence" value="ECO:0007005"/>
    <property type="project" value="TAIR"/>
</dbReference>
<dbReference type="GO" id="GO:0046872">
    <property type="term" value="F:metal ion binding"/>
    <property type="evidence" value="ECO:0007669"/>
    <property type="project" value="UniProtKB-KW"/>
</dbReference>
<dbReference type="GO" id="GO:0004722">
    <property type="term" value="F:protein serine/threonine phosphatase activity"/>
    <property type="evidence" value="ECO:0007669"/>
    <property type="project" value="UniProtKB-EC"/>
</dbReference>
<dbReference type="GO" id="GO:0009819">
    <property type="term" value="P:drought recovery"/>
    <property type="evidence" value="ECO:0000315"/>
    <property type="project" value="TAIR"/>
</dbReference>
<dbReference type="GO" id="GO:0000226">
    <property type="term" value="P:microtubule cytoskeleton organization"/>
    <property type="evidence" value="ECO:0000315"/>
    <property type="project" value="TAIR"/>
</dbReference>
<dbReference type="GO" id="GO:0045926">
    <property type="term" value="P:negative regulation of growth"/>
    <property type="evidence" value="ECO:0000315"/>
    <property type="project" value="TAIR"/>
</dbReference>
<dbReference type="GO" id="GO:0006470">
    <property type="term" value="P:protein dephosphorylation"/>
    <property type="evidence" value="ECO:0000315"/>
    <property type="project" value="TAIR"/>
</dbReference>
<dbReference type="CDD" id="cd00143">
    <property type="entry name" value="PP2Cc"/>
    <property type="match status" value="1"/>
</dbReference>
<dbReference type="FunFam" id="3.60.40.10:FF:000038">
    <property type="entry name" value="Probable protein phosphatase 2C 34"/>
    <property type="match status" value="1"/>
</dbReference>
<dbReference type="Gene3D" id="3.60.40.10">
    <property type="entry name" value="PPM-type phosphatase domain"/>
    <property type="match status" value="1"/>
</dbReference>
<dbReference type="InterPro" id="IPR015655">
    <property type="entry name" value="PP2C"/>
</dbReference>
<dbReference type="InterPro" id="IPR036457">
    <property type="entry name" value="PPM-type-like_dom_sf"/>
</dbReference>
<dbReference type="InterPro" id="IPR001932">
    <property type="entry name" value="PPM-type_phosphatase-like_dom"/>
</dbReference>
<dbReference type="PANTHER" id="PTHR47992">
    <property type="entry name" value="PROTEIN PHOSPHATASE"/>
    <property type="match status" value="1"/>
</dbReference>
<dbReference type="Pfam" id="PF00481">
    <property type="entry name" value="PP2C"/>
    <property type="match status" value="1"/>
</dbReference>
<dbReference type="SMART" id="SM00332">
    <property type="entry name" value="PP2Cc"/>
    <property type="match status" value="1"/>
</dbReference>
<dbReference type="SUPFAM" id="SSF81606">
    <property type="entry name" value="PP2C-like"/>
    <property type="match status" value="1"/>
</dbReference>
<dbReference type="PROSITE" id="PS51746">
    <property type="entry name" value="PPM_2"/>
    <property type="match status" value="1"/>
</dbReference>